<dbReference type="EC" id="1.17.7.3" evidence="1"/>
<dbReference type="EMBL" id="CP000139">
    <property type="protein sequence ID" value="ABR39103.1"/>
    <property type="molecule type" value="Genomic_DNA"/>
</dbReference>
<dbReference type="RefSeq" id="WP_011965170.1">
    <property type="nucleotide sequence ID" value="NC_009614.1"/>
</dbReference>
<dbReference type="SMR" id="A6L089"/>
<dbReference type="STRING" id="435590.BVU_1415"/>
<dbReference type="PaxDb" id="435590-BVU_1415"/>
<dbReference type="GeneID" id="5302381"/>
<dbReference type="KEGG" id="bvu:BVU_1415"/>
<dbReference type="PATRIC" id="fig|435590.9.peg.1477"/>
<dbReference type="eggNOG" id="COG0821">
    <property type="taxonomic scope" value="Bacteria"/>
</dbReference>
<dbReference type="HOGENOM" id="CLU_012689_0_0_10"/>
<dbReference type="BioCyc" id="BVUL435590:G1G59-1481-MONOMER"/>
<dbReference type="UniPathway" id="UPA00056">
    <property type="reaction ID" value="UER00096"/>
</dbReference>
<dbReference type="Proteomes" id="UP000002861">
    <property type="component" value="Chromosome"/>
</dbReference>
<dbReference type="GO" id="GO:0051539">
    <property type="term" value="F:4 iron, 4 sulfur cluster binding"/>
    <property type="evidence" value="ECO:0007669"/>
    <property type="project" value="UniProtKB-UniRule"/>
</dbReference>
<dbReference type="GO" id="GO:0046429">
    <property type="term" value="F:4-hydroxy-3-methylbut-2-en-1-yl diphosphate synthase activity (ferredoxin)"/>
    <property type="evidence" value="ECO:0007669"/>
    <property type="project" value="UniProtKB-UniRule"/>
</dbReference>
<dbReference type="GO" id="GO:0141197">
    <property type="term" value="F:4-hydroxy-3-methylbut-2-enyl-diphosphate synthase activity (flavodoxin)"/>
    <property type="evidence" value="ECO:0007669"/>
    <property type="project" value="UniProtKB-EC"/>
</dbReference>
<dbReference type="GO" id="GO:0005506">
    <property type="term" value="F:iron ion binding"/>
    <property type="evidence" value="ECO:0007669"/>
    <property type="project" value="InterPro"/>
</dbReference>
<dbReference type="GO" id="GO:0019288">
    <property type="term" value="P:isopentenyl diphosphate biosynthetic process, methylerythritol 4-phosphate pathway"/>
    <property type="evidence" value="ECO:0007669"/>
    <property type="project" value="UniProtKB-UniRule"/>
</dbReference>
<dbReference type="GO" id="GO:0016114">
    <property type="term" value="P:terpenoid biosynthetic process"/>
    <property type="evidence" value="ECO:0007669"/>
    <property type="project" value="InterPro"/>
</dbReference>
<dbReference type="FunFam" id="3.20.20.20:FF:000005">
    <property type="entry name" value="4-hydroxy-3-methylbut-2-en-1-yl diphosphate synthase (flavodoxin)"/>
    <property type="match status" value="1"/>
</dbReference>
<dbReference type="FunFam" id="3.30.413.10:FF:000006">
    <property type="entry name" value="4-hydroxy-3-methylbut-2-en-1-yl diphosphate synthase (flavodoxin)"/>
    <property type="match status" value="1"/>
</dbReference>
<dbReference type="Gene3D" id="3.20.20.20">
    <property type="entry name" value="Dihydropteroate synthase-like"/>
    <property type="match status" value="1"/>
</dbReference>
<dbReference type="Gene3D" id="3.30.413.10">
    <property type="entry name" value="Sulfite Reductase Hemoprotein, domain 1"/>
    <property type="match status" value="1"/>
</dbReference>
<dbReference type="HAMAP" id="MF_00159">
    <property type="entry name" value="IspG"/>
    <property type="match status" value="1"/>
</dbReference>
<dbReference type="InterPro" id="IPR011005">
    <property type="entry name" value="Dihydropteroate_synth-like_sf"/>
</dbReference>
<dbReference type="InterPro" id="IPR017178">
    <property type="entry name" value="IspG_atypical"/>
</dbReference>
<dbReference type="InterPro" id="IPR004588">
    <property type="entry name" value="IspG_bac-typ"/>
</dbReference>
<dbReference type="InterPro" id="IPR045854">
    <property type="entry name" value="NO2/SO3_Rdtase_4Fe4S_sf"/>
</dbReference>
<dbReference type="NCBIfam" id="TIGR00612">
    <property type="entry name" value="ispG_gcpE"/>
    <property type="match status" value="1"/>
</dbReference>
<dbReference type="NCBIfam" id="NF002534">
    <property type="entry name" value="PRK02048.1"/>
    <property type="match status" value="1"/>
</dbReference>
<dbReference type="PANTHER" id="PTHR30454">
    <property type="entry name" value="4-HYDROXY-3-METHYLBUT-2-EN-1-YL DIPHOSPHATE SYNTHASE"/>
    <property type="match status" value="1"/>
</dbReference>
<dbReference type="PANTHER" id="PTHR30454:SF0">
    <property type="entry name" value="4-HYDROXY-3-METHYLBUT-2-EN-1-YL DIPHOSPHATE SYNTHASE (FERREDOXIN), CHLOROPLASTIC"/>
    <property type="match status" value="1"/>
</dbReference>
<dbReference type="Pfam" id="PF04551">
    <property type="entry name" value="GcpE"/>
    <property type="match status" value="2"/>
</dbReference>
<dbReference type="PIRSF" id="PIRSF037336">
    <property type="entry name" value="IspG_like"/>
    <property type="match status" value="1"/>
</dbReference>
<dbReference type="SUPFAM" id="SSF56014">
    <property type="entry name" value="Nitrite and sulphite reductase 4Fe-4S domain-like"/>
    <property type="match status" value="1"/>
</dbReference>
<reference key="1">
    <citation type="journal article" date="2007" name="PLoS Biol.">
        <title>Evolution of symbiotic bacteria in the distal human intestine.</title>
        <authorList>
            <person name="Xu J."/>
            <person name="Mahowald M.A."/>
            <person name="Ley R.E."/>
            <person name="Lozupone C.A."/>
            <person name="Hamady M."/>
            <person name="Martens E.C."/>
            <person name="Henrissat B."/>
            <person name="Coutinho P.M."/>
            <person name="Minx P."/>
            <person name="Latreille P."/>
            <person name="Cordum H."/>
            <person name="Van Brunt A."/>
            <person name="Kim K."/>
            <person name="Fulton R.S."/>
            <person name="Fulton L.A."/>
            <person name="Clifton S.W."/>
            <person name="Wilson R.K."/>
            <person name="Knight R.D."/>
            <person name="Gordon J.I."/>
        </authorList>
    </citation>
    <scope>NUCLEOTIDE SEQUENCE [LARGE SCALE GENOMIC DNA]</scope>
    <source>
        <strain>ATCC 8482 / DSM 1447 / JCM 5826 / CCUG 4940 / NBRC 14291 / NCTC 11154</strain>
    </source>
</reference>
<name>ISPG_PHOV8</name>
<feature type="chain" id="PRO_1000011439" description="4-hydroxy-3-methylbut-2-en-1-yl diphosphate synthase (flavodoxin)">
    <location>
        <begin position="1"/>
        <end position="614"/>
    </location>
</feature>
<feature type="binding site" evidence="1">
    <location>
        <position position="522"/>
    </location>
    <ligand>
        <name>[4Fe-4S] cluster</name>
        <dbReference type="ChEBI" id="CHEBI:49883"/>
    </ligand>
</feature>
<feature type="binding site" evidence="1">
    <location>
        <position position="525"/>
    </location>
    <ligand>
        <name>[4Fe-4S] cluster</name>
        <dbReference type="ChEBI" id="CHEBI:49883"/>
    </ligand>
</feature>
<feature type="binding site" evidence="1">
    <location>
        <position position="556"/>
    </location>
    <ligand>
        <name>[4Fe-4S] cluster</name>
        <dbReference type="ChEBI" id="CHEBI:49883"/>
    </ligand>
</feature>
<feature type="binding site" evidence="1">
    <location>
        <position position="563"/>
    </location>
    <ligand>
        <name>[4Fe-4S] cluster</name>
        <dbReference type="ChEBI" id="CHEBI:49883"/>
    </ligand>
</feature>
<sequence>MDLFNYSRRESSEVNIGATPLGGNNPIRIQSMTNTVTMDTEACVEQAKRIIDAGGEYVRLTTQGVREAENLKNINIGLRSQGYDTPLVADVHFNPKVADVAAQYAEKVRINPGNYVDPGRTFQKLEYTDEEYAQEIEKIRARFIPFLNICKENHTAIRIGVNHGSLSDRIMSHYGDTPEGMVESCMEFLRICVAEHFNDVVISIKASNTVVMVRTVRLLVKEMEKEGMAFPLHLGVTEAGDGEDGRIKSALGIGALLADGLGDTIRVSLSEAPENEIPVARKLVDYILTREGHPFIPGKEAPQFNYLSPGRRKTKAVRNIGGDNLPVVIAERLEGSFETNPQFKPDYIYCGGSVPQSRDNNIAYLVDANAWNPEDKNVYPAFNYQQMIELHHTVSDLKFLFLPYMAMNDEVIAALKLHPEVVIIAQSNHPNRLGEYRAMTHELMNEGLENPVVFFQYYQETKAEDLQIKAAADMGALIFDGLCDGIFLYNQGPLSHIVVDTTAFGILQAGRIRTSKTEYISCPGCGRTLYDLESTIARIKTATSHLKGLKIGIMGCIVNGPGEMADADYGYVGAGRGKISLYKKKECIEKNIPEDQAVEKLIELIKANGDYTEK</sequence>
<comment type="function">
    <text evidence="1">Converts 2C-methyl-D-erythritol 2,4-cyclodiphosphate (ME-2,4cPP) into 1-hydroxy-2-methyl-2-(E)-butenyl 4-diphosphate.</text>
</comment>
<comment type="catalytic activity">
    <reaction evidence="1">
        <text>(2E)-4-hydroxy-3-methylbut-2-enyl diphosphate + oxidized [flavodoxin] + H2O + 2 H(+) = 2-C-methyl-D-erythritol 2,4-cyclic diphosphate + reduced [flavodoxin]</text>
        <dbReference type="Rhea" id="RHEA:43604"/>
        <dbReference type="Rhea" id="RHEA-COMP:10622"/>
        <dbReference type="Rhea" id="RHEA-COMP:10623"/>
        <dbReference type="ChEBI" id="CHEBI:15377"/>
        <dbReference type="ChEBI" id="CHEBI:15378"/>
        <dbReference type="ChEBI" id="CHEBI:57618"/>
        <dbReference type="ChEBI" id="CHEBI:58210"/>
        <dbReference type="ChEBI" id="CHEBI:58483"/>
        <dbReference type="ChEBI" id="CHEBI:128753"/>
        <dbReference type="EC" id="1.17.7.3"/>
    </reaction>
</comment>
<comment type="cofactor">
    <cofactor evidence="1">
        <name>[4Fe-4S] cluster</name>
        <dbReference type="ChEBI" id="CHEBI:49883"/>
    </cofactor>
    <text evidence="1">Binds 1 [4Fe-4S] cluster.</text>
</comment>
<comment type="pathway">
    <text evidence="1">Isoprenoid biosynthesis; isopentenyl diphosphate biosynthesis via DXP pathway; isopentenyl diphosphate from 1-deoxy-D-xylulose 5-phosphate: step 5/6.</text>
</comment>
<comment type="similarity">
    <text evidence="1">Belongs to the IspG family.</text>
</comment>
<proteinExistence type="inferred from homology"/>
<accession>A6L089</accession>
<evidence type="ECO:0000255" key="1">
    <source>
        <dbReference type="HAMAP-Rule" id="MF_00159"/>
    </source>
</evidence>
<protein>
    <recommendedName>
        <fullName evidence="1">4-hydroxy-3-methylbut-2-en-1-yl diphosphate synthase (flavodoxin)</fullName>
        <ecNumber evidence="1">1.17.7.3</ecNumber>
    </recommendedName>
    <alternativeName>
        <fullName evidence="1">1-hydroxy-2-methyl-2-(E)-butenyl 4-diphosphate synthase</fullName>
    </alternativeName>
</protein>
<keyword id="KW-0004">4Fe-4S</keyword>
<keyword id="KW-0408">Iron</keyword>
<keyword id="KW-0411">Iron-sulfur</keyword>
<keyword id="KW-0414">Isoprene biosynthesis</keyword>
<keyword id="KW-0479">Metal-binding</keyword>
<keyword id="KW-0560">Oxidoreductase</keyword>
<organism>
    <name type="scientific">Phocaeicola vulgatus (strain ATCC 8482 / DSM 1447 / JCM 5826 / CCUG 4940 / NBRC 14291 / NCTC 11154)</name>
    <name type="common">Bacteroides vulgatus</name>
    <dbReference type="NCBI Taxonomy" id="435590"/>
    <lineage>
        <taxon>Bacteria</taxon>
        <taxon>Pseudomonadati</taxon>
        <taxon>Bacteroidota</taxon>
        <taxon>Bacteroidia</taxon>
        <taxon>Bacteroidales</taxon>
        <taxon>Bacteroidaceae</taxon>
        <taxon>Phocaeicola</taxon>
    </lineage>
</organism>
<gene>
    <name evidence="1" type="primary">ispG</name>
    <name type="ordered locus">BVU_1415</name>
</gene>